<feature type="initiator methionine" description="Removed" evidence="4">
    <location>
        <position position="1"/>
    </location>
</feature>
<feature type="chain" id="PRO_0000204038" description="Nitrilase 3">
    <location>
        <begin position="2"/>
        <end position="346"/>
    </location>
</feature>
<feature type="domain" description="CN hydrolase" evidence="1">
    <location>
        <begin position="25"/>
        <end position="297"/>
    </location>
</feature>
<feature type="active site" description="Proton acceptor" evidence="1">
    <location>
        <position position="65"/>
    </location>
</feature>
<feature type="active site" description="Proton donor" evidence="1">
    <location>
        <position position="152"/>
    </location>
</feature>
<feature type="active site" description="Nucleophile" evidence="1 2">
    <location>
        <position position="186"/>
    </location>
</feature>
<feature type="modified residue" description="N-acetylserine" evidence="4">
    <location>
        <position position="2"/>
    </location>
</feature>
<name>NRL3_ARATH</name>
<comment type="function">
    <text>Can convert indole-3-acetonitrile to the plant hormone indole-3-acetic acid.</text>
</comment>
<comment type="catalytic activity">
    <reaction evidence="2">
        <text>a nitrile + 2 H2O = a carboxylate + NH4(+)</text>
        <dbReference type="Rhea" id="RHEA:21724"/>
        <dbReference type="ChEBI" id="CHEBI:15377"/>
        <dbReference type="ChEBI" id="CHEBI:18379"/>
        <dbReference type="ChEBI" id="CHEBI:28938"/>
        <dbReference type="ChEBI" id="CHEBI:29067"/>
        <dbReference type="EC" id="3.5.5.1"/>
    </reaction>
</comment>
<comment type="subcellular location">
    <subcellularLocation>
        <location>Cell membrane</location>
        <topology>Peripheral membrane protein</topology>
        <orientation>Cytoplasmic side</orientation>
    </subcellularLocation>
    <text>Tightly associated with the plasma membrane.</text>
</comment>
<comment type="similarity">
    <text evidence="3">Belongs to the carbon-nitrogen hydrolase superfamily. Nitrilase family.</text>
</comment>
<keyword id="KW-0007">Acetylation</keyword>
<keyword id="KW-1003">Cell membrane</keyword>
<keyword id="KW-0378">Hydrolase</keyword>
<keyword id="KW-0472">Membrane</keyword>
<keyword id="KW-1185">Reference proteome</keyword>
<sequence length="346" mass="38022">MSSTEEMSSVKNTTQVIGVDPSSTVRVTIVQSSTVYNDTPATLDKAEKFIVEAASKGAKLVLFPEAFIGGYPRGFRFGLAVGVHNEEGRDEFRNYHASAIKVPGPEVERLAELAGKNNVHLVMGAIEKDGYTLYCTALFFSPQGQFLGKHRKVMPTSLERCIWGQGDGSTIPVYDTPIGKIGAAICWENRMPLYRTALYAKGIEIYCAPTADYSLEWQASMIHIAVEGGCFVLSAHQFCKRREFPEHPDYLFNDIVDTKEHDPTVSGGGSVIISPLGKVLAGPNYESEGLVTADLDLGDIARAKLYFDVVGHYSKPDIFNLTVNEHPKKPVTFMTKVEKAEDESNK</sequence>
<reference key="1">
    <citation type="journal article" date="1994" name="Proc. Natl. Acad. Sci. U.S.A.">
        <title>Differential regulation of an auxin-producing nitrilase gene family in Arabidopsis thaliana.</title>
        <authorList>
            <person name="Bartel B."/>
            <person name="Fink G.R."/>
        </authorList>
    </citation>
    <scope>NUCLEOTIDE SEQUENCE [MRNA]</scope>
    <source>
        <strain>cv. Columbia</strain>
    </source>
</reference>
<reference key="2">
    <citation type="journal article" date="1998" name="Plant Mol. Biol.">
        <title>Structural analysis of the nit2/nit1/nit3 gene cluster encoding nitrilases, enzymes catalyzing the terminal activation step in indole-acetic acid biosynthesis in Arabidopsis thaliana.</title>
        <authorList>
            <person name="Hillebrand H."/>
            <person name="Bartling D."/>
            <person name="Weiler E.W."/>
        </authorList>
    </citation>
    <scope>NUCLEOTIDE SEQUENCE [GENOMIC DNA]</scope>
    <source>
        <strain>cv. Columbia</strain>
    </source>
</reference>
<reference key="3">
    <citation type="journal article" date="2000" name="Nature">
        <title>Sequence and analysis of chromosome 3 of the plant Arabidopsis thaliana.</title>
        <authorList>
            <person name="Salanoubat M."/>
            <person name="Lemcke K."/>
            <person name="Rieger M."/>
            <person name="Ansorge W."/>
            <person name="Unseld M."/>
            <person name="Fartmann B."/>
            <person name="Valle G."/>
            <person name="Bloecker H."/>
            <person name="Perez-Alonso M."/>
            <person name="Obermaier B."/>
            <person name="Delseny M."/>
            <person name="Boutry M."/>
            <person name="Grivell L.A."/>
            <person name="Mache R."/>
            <person name="Puigdomenech P."/>
            <person name="De Simone V."/>
            <person name="Choisne N."/>
            <person name="Artiguenave F."/>
            <person name="Robert C."/>
            <person name="Brottier P."/>
            <person name="Wincker P."/>
            <person name="Cattolico L."/>
            <person name="Weissenbach J."/>
            <person name="Saurin W."/>
            <person name="Quetier F."/>
            <person name="Schaefer M."/>
            <person name="Mueller-Auer S."/>
            <person name="Gabel C."/>
            <person name="Fuchs M."/>
            <person name="Benes V."/>
            <person name="Wurmbach E."/>
            <person name="Drzonek H."/>
            <person name="Erfle H."/>
            <person name="Jordan N."/>
            <person name="Bangert S."/>
            <person name="Wiedelmann R."/>
            <person name="Kranz H."/>
            <person name="Voss H."/>
            <person name="Holland R."/>
            <person name="Brandt P."/>
            <person name="Nyakatura G."/>
            <person name="Vezzi A."/>
            <person name="D'Angelo M."/>
            <person name="Pallavicini A."/>
            <person name="Toppo S."/>
            <person name="Simionati B."/>
            <person name="Conrad A."/>
            <person name="Hornischer K."/>
            <person name="Kauer G."/>
            <person name="Loehnert T.-H."/>
            <person name="Nordsiek G."/>
            <person name="Reichelt J."/>
            <person name="Scharfe M."/>
            <person name="Schoen O."/>
            <person name="Bargues M."/>
            <person name="Terol J."/>
            <person name="Climent J."/>
            <person name="Navarro P."/>
            <person name="Collado C."/>
            <person name="Perez-Perez A."/>
            <person name="Ottenwaelder B."/>
            <person name="Duchemin D."/>
            <person name="Cooke R."/>
            <person name="Laudie M."/>
            <person name="Berger-Llauro C."/>
            <person name="Purnelle B."/>
            <person name="Masuy D."/>
            <person name="de Haan M."/>
            <person name="Maarse A.C."/>
            <person name="Alcaraz J.-P."/>
            <person name="Cottet A."/>
            <person name="Casacuberta E."/>
            <person name="Monfort A."/>
            <person name="Argiriou A."/>
            <person name="Flores M."/>
            <person name="Liguori R."/>
            <person name="Vitale D."/>
            <person name="Mannhaupt G."/>
            <person name="Haase D."/>
            <person name="Schoof H."/>
            <person name="Rudd S."/>
            <person name="Zaccaria P."/>
            <person name="Mewes H.-W."/>
            <person name="Mayer K.F.X."/>
            <person name="Kaul S."/>
            <person name="Town C.D."/>
            <person name="Koo H.L."/>
            <person name="Tallon L.J."/>
            <person name="Jenkins J."/>
            <person name="Rooney T."/>
            <person name="Rizzo M."/>
            <person name="Walts A."/>
            <person name="Utterback T."/>
            <person name="Fujii C.Y."/>
            <person name="Shea T.P."/>
            <person name="Creasy T.H."/>
            <person name="Haas B."/>
            <person name="Maiti R."/>
            <person name="Wu D."/>
            <person name="Peterson J."/>
            <person name="Van Aken S."/>
            <person name="Pai G."/>
            <person name="Militscher J."/>
            <person name="Sellers P."/>
            <person name="Gill J.E."/>
            <person name="Feldblyum T.V."/>
            <person name="Preuss D."/>
            <person name="Lin X."/>
            <person name="Nierman W.C."/>
            <person name="Salzberg S.L."/>
            <person name="White O."/>
            <person name="Venter J.C."/>
            <person name="Fraser C.M."/>
            <person name="Kaneko T."/>
            <person name="Nakamura Y."/>
            <person name="Sato S."/>
            <person name="Kato T."/>
            <person name="Asamizu E."/>
            <person name="Sasamoto S."/>
            <person name="Kimura T."/>
            <person name="Idesawa K."/>
            <person name="Kawashima K."/>
            <person name="Kishida Y."/>
            <person name="Kiyokawa C."/>
            <person name="Kohara M."/>
            <person name="Matsumoto M."/>
            <person name="Matsuno A."/>
            <person name="Muraki A."/>
            <person name="Nakayama S."/>
            <person name="Nakazaki N."/>
            <person name="Shinpo S."/>
            <person name="Takeuchi C."/>
            <person name="Wada T."/>
            <person name="Watanabe A."/>
            <person name="Yamada M."/>
            <person name="Yasuda M."/>
            <person name="Tabata S."/>
        </authorList>
    </citation>
    <scope>NUCLEOTIDE SEQUENCE [LARGE SCALE GENOMIC DNA]</scope>
    <source>
        <strain>cv. Columbia</strain>
    </source>
</reference>
<reference key="4">
    <citation type="journal article" date="2017" name="Plant J.">
        <title>Araport11: a complete reannotation of the Arabidopsis thaliana reference genome.</title>
        <authorList>
            <person name="Cheng C.Y."/>
            <person name="Krishnakumar V."/>
            <person name="Chan A.P."/>
            <person name="Thibaud-Nissen F."/>
            <person name="Schobel S."/>
            <person name="Town C.D."/>
        </authorList>
    </citation>
    <scope>GENOME REANNOTATION</scope>
    <source>
        <strain>cv. Columbia</strain>
    </source>
</reference>
<reference key="5">
    <citation type="journal article" date="2003" name="Science">
        <title>Empirical analysis of transcriptional activity in the Arabidopsis genome.</title>
        <authorList>
            <person name="Yamada K."/>
            <person name="Lim J."/>
            <person name="Dale J.M."/>
            <person name="Chen H."/>
            <person name="Shinn P."/>
            <person name="Palm C.J."/>
            <person name="Southwick A.M."/>
            <person name="Wu H.C."/>
            <person name="Kim C.J."/>
            <person name="Nguyen M."/>
            <person name="Pham P.K."/>
            <person name="Cheuk R.F."/>
            <person name="Karlin-Newmann G."/>
            <person name="Liu S.X."/>
            <person name="Lam B."/>
            <person name="Sakano H."/>
            <person name="Wu T."/>
            <person name="Yu G."/>
            <person name="Miranda M."/>
            <person name="Quach H.L."/>
            <person name="Tripp M."/>
            <person name="Chang C.H."/>
            <person name="Lee J.M."/>
            <person name="Toriumi M.J."/>
            <person name="Chan M.M."/>
            <person name="Tang C.C."/>
            <person name="Onodera C.S."/>
            <person name="Deng J.M."/>
            <person name="Akiyama K."/>
            <person name="Ansari Y."/>
            <person name="Arakawa T."/>
            <person name="Banh J."/>
            <person name="Banno F."/>
            <person name="Bowser L."/>
            <person name="Brooks S.Y."/>
            <person name="Carninci P."/>
            <person name="Chao Q."/>
            <person name="Choy N."/>
            <person name="Enju A."/>
            <person name="Goldsmith A.D."/>
            <person name="Gurjal M."/>
            <person name="Hansen N.F."/>
            <person name="Hayashizaki Y."/>
            <person name="Johnson-Hopson C."/>
            <person name="Hsuan V.W."/>
            <person name="Iida K."/>
            <person name="Karnes M."/>
            <person name="Khan S."/>
            <person name="Koesema E."/>
            <person name="Ishida J."/>
            <person name="Jiang P.X."/>
            <person name="Jones T."/>
            <person name="Kawai J."/>
            <person name="Kamiya A."/>
            <person name="Meyers C."/>
            <person name="Nakajima M."/>
            <person name="Narusaka M."/>
            <person name="Seki M."/>
            <person name="Sakurai T."/>
            <person name="Satou M."/>
            <person name="Tamse R."/>
            <person name="Vaysberg M."/>
            <person name="Wallender E.K."/>
            <person name="Wong C."/>
            <person name="Yamamura Y."/>
            <person name="Yuan S."/>
            <person name="Shinozaki K."/>
            <person name="Davis R.W."/>
            <person name="Theologis A."/>
            <person name="Ecker J.R."/>
        </authorList>
    </citation>
    <scope>NUCLEOTIDE SEQUENCE [LARGE SCALE MRNA]</scope>
    <source>
        <strain>cv. Columbia</strain>
    </source>
</reference>
<reference key="6">
    <citation type="journal article" date="2012" name="Mol. Cell. Proteomics">
        <title>Comparative large-scale characterisation of plant vs. mammal proteins reveals similar and idiosyncratic N-alpha acetylation features.</title>
        <authorList>
            <person name="Bienvenut W.V."/>
            <person name="Sumpton D."/>
            <person name="Martinez A."/>
            <person name="Lilla S."/>
            <person name="Espagne C."/>
            <person name="Meinnel T."/>
            <person name="Giglione C."/>
        </authorList>
    </citation>
    <scope>ACETYLATION [LARGE SCALE ANALYSIS] AT SER-2</scope>
    <scope>CLEAVAGE OF INITIATOR METHIONINE [LARGE SCALE ANALYSIS]</scope>
    <scope>IDENTIFICATION BY MASS SPECTROMETRY [LARGE SCALE ANALYSIS]</scope>
</reference>
<proteinExistence type="evidence at protein level"/>
<accession>P46010</accession>
<accession>O04909</accession>
<gene>
    <name type="primary">NIT3</name>
    <name type="ordered locus">At3g44320</name>
    <name type="ORF">T10D17_110</name>
</gene>
<evidence type="ECO:0000255" key="1">
    <source>
        <dbReference type="PROSITE-ProRule" id="PRU00054"/>
    </source>
</evidence>
<evidence type="ECO:0000255" key="2">
    <source>
        <dbReference type="PROSITE-ProRule" id="PRU10105"/>
    </source>
</evidence>
<evidence type="ECO:0000305" key="3"/>
<evidence type="ECO:0007744" key="4">
    <source>
    </source>
</evidence>
<protein>
    <recommendedName>
        <fullName>Nitrilase 3</fullName>
        <ecNumber>3.5.5.1</ecNumber>
    </recommendedName>
</protein>
<dbReference type="EC" id="3.5.5.1"/>
<dbReference type="EMBL" id="U09959">
    <property type="protein sequence ID" value="AAA19627.1"/>
    <property type="molecule type" value="mRNA"/>
</dbReference>
<dbReference type="EMBL" id="Y07648">
    <property type="protein sequence ID" value="CAA68936.2"/>
    <property type="molecule type" value="Genomic_DNA"/>
</dbReference>
<dbReference type="EMBL" id="AL353865">
    <property type="protein sequence ID" value="CAB89000.1"/>
    <property type="molecule type" value="Genomic_DNA"/>
</dbReference>
<dbReference type="EMBL" id="CP002686">
    <property type="protein sequence ID" value="AEE77890.1"/>
    <property type="molecule type" value="Genomic_DNA"/>
</dbReference>
<dbReference type="EMBL" id="BT002773">
    <property type="protein sequence ID" value="AAO22601.1"/>
    <property type="molecule type" value="mRNA"/>
</dbReference>
<dbReference type="EMBL" id="BT004345">
    <property type="protein sequence ID" value="AAO42339.1"/>
    <property type="molecule type" value="mRNA"/>
</dbReference>
<dbReference type="PIR" id="T49148">
    <property type="entry name" value="T49148"/>
</dbReference>
<dbReference type="RefSeq" id="NP_190018.1">
    <property type="nucleotide sequence ID" value="NM_114300.4"/>
</dbReference>
<dbReference type="EMDB" id="EMD-3496"/>
<dbReference type="SMR" id="P46010"/>
<dbReference type="BioGRID" id="8877">
    <property type="interactions" value="1"/>
</dbReference>
<dbReference type="FunCoup" id="P46010">
    <property type="interactions" value="169"/>
</dbReference>
<dbReference type="STRING" id="3702.P46010"/>
<dbReference type="iPTMnet" id="P46010"/>
<dbReference type="PaxDb" id="3702-AT3G44320.1"/>
<dbReference type="ProteomicsDB" id="250563"/>
<dbReference type="EnsemblPlants" id="AT3G44320.1">
    <property type="protein sequence ID" value="AT3G44320.1"/>
    <property type="gene ID" value="AT3G44320"/>
</dbReference>
<dbReference type="GeneID" id="823557"/>
<dbReference type="Gramene" id="AT3G44320.1">
    <property type="protein sequence ID" value="AT3G44320.1"/>
    <property type="gene ID" value="AT3G44320"/>
</dbReference>
<dbReference type="KEGG" id="ath:AT3G44320"/>
<dbReference type="Araport" id="AT3G44320"/>
<dbReference type="TAIR" id="AT3G44320">
    <property type="gene designation" value="NIT3"/>
</dbReference>
<dbReference type="eggNOG" id="KOG0805">
    <property type="taxonomic scope" value="Eukaryota"/>
</dbReference>
<dbReference type="HOGENOM" id="CLU_030130_6_1_1"/>
<dbReference type="InParanoid" id="P46010"/>
<dbReference type="OMA" id="FPEHPDY"/>
<dbReference type="PhylomeDB" id="P46010"/>
<dbReference type="BioCyc" id="ARA:AT3G44320-MONOMER"/>
<dbReference type="BioCyc" id="MetaCyc:AT3G44320-MONOMER"/>
<dbReference type="BRENDA" id="3.5.5.1">
    <property type="organism ID" value="399"/>
</dbReference>
<dbReference type="CD-CODE" id="4299E36E">
    <property type="entry name" value="Nucleolus"/>
</dbReference>
<dbReference type="PRO" id="PR:P46010"/>
<dbReference type="Proteomes" id="UP000006548">
    <property type="component" value="Chromosome 3"/>
</dbReference>
<dbReference type="ExpressionAtlas" id="P46010">
    <property type="expression patterns" value="baseline and differential"/>
</dbReference>
<dbReference type="GO" id="GO:0005829">
    <property type="term" value="C:cytosol"/>
    <property type="evidence" value="ECO:0007005"/>
    <property type="project" value="TAIR"/>
</dbReference>
<dbReference type="GO" id="GO:0005886">
    <property type="term" value="C:plasma membrane"/>
    <property type="evidence" value="ECO:0007669"/>
    <property type="project" value="UniProtKB-SubCell"/>
</dbReference>
<dbReference type="GO" id="GO:0080061">
    <property type="term" value="F:indole-3-acetonitrile nitrilase activity"/>
    <property type="evidence" value="ECO:0000314"/>
    <property type="project" value="TAIR"/>
</dbReference>
<dbReference type="GO" id="GO:0080109">
    <property type="term" value="F:indole-3-acetonitrile nitrile hydratase activity"/>
    <property type="evidence" value="ECO:0000314"/>
    <property type="project" value="TAIR"/>
</dbReference>
<dbReference type="GO" id="GO:0003729">
    <property type="term" value="F:mRNA binding"/>
    <property type="evidence" value="ECO:0000314"/>
    <property type="project" value="TAIR"/>
</dbReference>
<dbReference type="GO" id="GO:0000257">
    <property type="term" value="F:nitrilase activity"/>
    <property type="evidence" value="ECO:0000314"/>
    <property type="project" value="TAIR"/>
</dbReference>
<dbReference type="GO" id="GO:0009970">
    <property type="term" value="P:cellular response to sulfate starvation"/>
    <property type="evidence" value="ECO:0000270"/>
    <property type="project" value="TAIR"/>
</dbReference>
<dbReference type="GO" id="GO:0019762">
    <property type="term" value="P:glucosinolate catabolic process"/>
    <property type="evidence" value="ECO:0000304"/>
    <property type="project" value="TAIR"/>
</dbReference>
<dbReference type="CDD" id="cd07564">
    <property type="entry name" value="nitrilases_CHs"/>
    <property type="match status" value="1"/>
</dbReference>
<dbReference type="FunFam" id="3.60.110.10:FF:000006">
    <property type="entry name" value="Bifunctional nitrilase/nitrile hydratase NIT4B"/>
    <property type="match status" value="1"/>
</dbReference>
<dbReference type="Gene3D" id="3.60.110.10">
    <property type="entry name" value="Carbon-nitrogen hydrolase"/>
    <property type="match status" value="1"/>
</dbReference>
<dbReference type="InterPro" id="IPR003010">
    <property type="entry name" value="C-N_Hydrolase"/>
</dbReference>
<dbReference type="InterPro" id="IPR036526">
    <property type="entry name" value="C-N_Hydrolase_sf"/>
</dbReference>
<dbReference type="InterPro" id="IPR000132">
    <property type="entry name" value="Nitrilase/CN_hydratase_CS"/>
</dbReference>
<dbReference type="InterPro" id="IPR044149">
    <property type="entry name" value="Nitrilases_CHs"/>
</dbReference>
<dbReference type="PANTHER" id="PTHR46044">
    <property type="entry name" value="NITRILASE"/>
    <property type="match status" value="1"/>
</dbReference>
<dbReference type="PANTHER" id="PTHR46044:SF11">
    <property type="entry name" value="NITRILASE 1-RELATED"/>
    <property type="match status" value="1"/>
</dbReference>
<dbReference type="Pfam" id="PF00795">
    <property type="entry name" value="CN_hydrolase"/>
    <property type="match status" value="1"/>
</dbReference>
<dbReference type="SUPFAM" id="SSF56317">
    <property type="entry name" value="Carbon-nitrogen hydrolase"/>
    <property type="match status" value="1"/>
</dbReference>
<dbReference type="PROSITE" id="PS50263">
    <property type="entry name" value="CN_HYDROLASE"/>
    <property type="match status" value="1"/>
</dbReference>
<dbReference type="PROSITE" id="PS00920">
    <property type="entry name" value="NITRIL_CHT_1"/>
    <property type="match status" value="1"/>
</dbReference>
<dbReference type="PROSITE" id="PS00921">
    <property type="entry name" value="NITRIL_CHT_2"/>
    <property type="match status" value="1"/>
</dbReference>
<organism>
    <name type="scientific">Arabidopsis thaliana</name>
    <name type="common">Mouse-ear cress</name>
    <dbReference type="NCBI Taxonomy" id="3702"/>
    <lineage>
        <taxon>Eukaryota</taxon>
        <taxon>Viridiplantae</taxon>
        <taxon>Streptophyta</taxon>
        <taxon>Embryophyta</taxon>
        <taxon>Tracheophyta</taxon>
        <taxon>Spermatophyta</taxon>
        <taxon>Magnoliopsida</taxon>
        <taxon>eudicotyledons</taxon>
        <taxon>Gunneridae</taxon>
        <taxon>Pentapetalae</taxon>
        <taxon>rosids</taxon>
        <taxon>malvids</taxon>
        <taxon>Brassicales</taxon>
        <taxon>Brassicaceae</taxon>
        <taxon>Camelineae</taxon>
        <taxon>Arabidopsis</taxon>
    </lineage>
</organism>